<organism>
    <name type="scientific">Cronobacter sakazakii (strain ATCC BAA-894)</name>
    <name type="common">Enterobacter sakazakii</name>
    <dbReference type="NCBI Taxonomy" id="290339"/>
    <lineage>
        <taxon>Bacteria</taxon>
        <taxon>Pseudomonadati</taxon>
        <taxon>Pseudomonadota</taxon>
        <taxon>Gammaproteobacteria</taxon>
        <taxon>Enterobacterales</taxon>
        <taxon>Enterobacteriaceae</taxon>
        <taxon>Cronobacter</taxon>
    </lineage>
</organism>
<comment type="similarity">
    <text evidence="1">Belongs to the bacterial ribosomal protein bL36 family.</text>
</comment>
<gene>
    <name evidence="1" type="primary">rpmJ2</name>
    <name type="ordered locus">ESA_02813</name>
</gene>
<proteinExistence type="inferred from homology"/>
<accession>A7MFN6</accession>
<dbReference type="EMBL" id="CP000783">
    <property type="protein sequence ID" value="ABU78043.1"/>
    <property type="molecule type" value="Genomic_DNA"/>
</dbReference>
<dbReference type="SMR" id="A7MFN6"/>
<dbReference type="KEGG" id="esa:ESA_02813"/>
<dbReference type="HOGENOM" id="CLU_135723_3_1_6"/>
<dbReference type="Proteomes" id="UP000000260">
    <property type="component" value="Chromosome"/>
</dbReference>
<dbReference type="GO" id="GO:1990904">
    <property type="term" value="C:ribonucleoprotein complex"/>
    <property type="evidence" value="ECO:0007669"/>
    <property type="project" value="UniProtKB-KW"/>
</dbReference>
<dbReference type="GO" id="GO:0005840">
    <property type="term" value="C:ribosome"/>
    <property type="evidence" value="ECO:0007669"/>
    <property type="project" value="UniProtKB-KW"/>
</dbReference>
<dbReference type="GO" id="GO:0003735">
    <property type="term" value="F:structural constituent of ribosome"/>
    <property type="evidence" value="ECO:0007669"/>
    <property type="project" value="InterPro"/>
</dbReference>
<dbReference type="GO" id="GO:0006412">
    <property type="term" value="P:translation"/>
    <property type="evidence" value="ECO:0007669"/>
    <property type="project" value="UniProtKB-UniRule"/>
</dbReference>
<dbReference type="HAMAP" id="MF_00251">
    <property type="entry name" value="Ribosomal_bL36"/>
    <property type="match status" value="1"/>
</dbReference>
<dbReference type="InterPro" id="IPR000473">
    <property type="entry name" value="Ribosomal_bL36"/>
</dbReference>
<dbReference type="InterPro" id="IPR035977">
    <property type="entry name" value="Ribosomal_bL36_sp"/>
</dbReference>
<dbReference type="InterPro" id="IPR047621">
    <property type="entry name" value="Ribosomal_L36_bact"/>
</dbReference>
<dbReference type="NCBIfam" id="NF002021">
    <property type="entry name" value="PRK00831.1"/>
    <property type="match status" value="1"/>
</dbReference>
<dbReference type="NCBIfam" id="TIGR01022">
    <property type="entry name" value="rpmJ_bact"/>
    <property type="match status" value="1"/>
</dbReference>
<dbReference type="PANTHER" id="PTHR47781">
    <property type="entry name" value="50S RIBOSOMAL PROTEIN L36 2"/>
    <property type="match status" value="1"/>
</dbReference>
<dbReference type="PANTHER" id="PTHR47781:SF1">
    <property type="entry name" value="LARGE RIBOSOMAL SUBUNIT PROTEIN BL36B"/>
    <property type="match status" value="1"/>
</dbReference>
<dbReference type="Pfam" id="PF00444">
    <property type="entry name" value="Ribosomal_L36"/>
    <property type="match status" value="1"/>
</dbReference>
<dbReference type="SUPFAM" id="SSF57840">
    <property type="entry name" value="Ribosomal protein L36"/>
    <property type="match status" value="1"/>
</dbReference>
<dbReference type="PROSITE" id="PS00828">
    <property type="entry name" value="RIBOSOMAL_L36"/>
    <property type="match status" value="1"/>
</dbReference>
<protein>
    <recommendedName>
        <fullName evidence="1">Large ribosomal subunit protein bL36B</fullName>
    </recommendedName>
    <alternativeName>
        <fullName evidence="2">50S ribosomal protein L36 2</fullName>
    </alternativeName>
</protein>
<sequence length="46" mass="5437">MQVLNSLRSAKARHPDCQIVRRKGRLYVICKTNPRFKAVQGRKKRK</sequence>
<name>RL362_CROS8</name>
<evidence type="ECO:0000255" key="1">
    <source>
        <dbReference type="HAMAP-Rule" id="MF_00251"/>
    </source>
</evidence>
<evidence type="ECO:0000305" key="2"/>
<reference key="1">
    <citation type="journal article" date="2010" name="PLoS ONE">
        <title>Genome sequence of Cronobacter sakazakii BAA-894 and comparative genomic hybridization analysis with other Cronobacter species.</title>
        <authorList>
            <person name="Kucerova E."/>
            <person name="Clifton S.W."/>
            <person name="Xia X.Q."/>
            <person name="Long F."/>
            <person name="Porwollik S."/>
            <person name="Fulton L."/>
            <person name="Fronick C."/>
            <person name="Minx P."/>
            <person name="Kyung K."/>
            <person name="Warren W."/>
            <person name="Fulton R."/>
            <person name="Feng D."/>
            <person name="Wollam A."/>
            <person name="Shah N."/>
            <person name="Bhonagiri V."/>
            <person name="Nash W.E."/>
            <person name="Hallsworth-Pepin K."/>
            <person name="Wilson R.K."/>
            <person name="McClelland M."/>
            <person name="Forsythe S.J."/>
        </authorList>
    </citation>
    <scope>NUCLEOTIDE SEQUENCE [LARGE SCALE GENOMIC DNA]</scope>
    <source>
        <strain>ATCC BAA-894</strain>
    </source>
</reference>
<keyword id="KW-1185">Reference proteome</keyword>
<keyword id="KW-0687">Ribonucleoprotein</keyword>
<keyword id="KW-0689">Ribosomal protein</keyword>
<feature type="chain" id="PRO_0000344665" description="Large ribosomal subunit protein bL36B">
    <location>
        <begin position="1"/>
        <end position="46"/>
    </location>
</feature>